<evidence type="ECO:0000255" key="1">
    <source>
        <dbReference type="HAMAP-Rule" id="MF_00580"/>
    </source>
</evidence>
<name>CH10_CORDI</name>
<keyword id="KW-0143">Chaperone</keyword>
<keyword id="KW-0963">Cytoplasm</keyword>
<keyword id="KW-1185">Reference proteome</keyword>
<comment type="function">
    <text evidence="1">Together with the chaperonin GroEL, plays an essential role in assisting protein folding. The GroEL-GroES system forms a nano-cage that allows encapsulation of the non-native substrate proteins and provides a physical environment optimized to promote and accelerate protein folding. GroES binds to the apical surface of the GroEL ring, thereby capping the opening of the GroEL channel.</text>
</comment>
<comment type="subunit">
    <text evidence="1">Heptamer of 7 subunits arranged in a ring. Interacts with the chaperonin GroEL.</text>
</comment>
<comment type="subcellular location">
    <subcellularLocation>
        <location evidence="1">Cytoplasm</location>
    </subcellularLocation>
</comment>
<comment type="similarity">
    <text evidence="1">Belongs to the GroES chaperonin family.</text>
</comment>
<organism>
    <name type="scientific">Corynebacterium diphtheriae (strain ATCC 700971 / NCTC 13129 / Biotype gravis)</name>
    <dbReference type="NCBI Taxonomy" id="257309"/>
    <lineage>
        <taxon>Bacteria</taxon>
        <taxon>Bacillati</taxon>
        <taxon>Actinomycetota</taxon>
        <taxon>Actinomycetes</taxon>
        <taxon>Mycobacteriales</taxon>
        <taxon>Corynebacteriaceae</taxon>
        <taxon>Corynebacterium</taxon>
    </lineage>
</organism>
<proteinExistence type="inferred from homology"/>
<feature type="chain" id="PRO_0000174741" description="Co-chaperonin GroES">
    <location>
        <begin position="1"/>
        <end position="98"/>
    </location>
</feature>
<reference key="1">
    <citation type="journal article" date="2003" name="Nucleic Acids Res.">
        <title>The complete genome sequence and analysis of Corynebacterium diphtheriae NCTC13129.</title>
        <authorList>
            <person name="Cerdeno-Tarraga A.-M."/>
            <person name="Efstratiou A."/>
            <person name="Dover L.G."/>
            <person name="Holden M.T.G."/>
            <person name="Pallen M.J."/>
            <person name="Bentley S.D."/>
            <person name="Besra G.S."/>
            <person name="Churcher C.M."/>
            <person name="James K.D."/>
            <person name="De Zoysa A."/>
            <person name="Chillingworth T."/>
            <person name="Cronin A."/>
            <person name="Dowd L."/>
            <person name="Feltwell T."/>
            <person name="Hamlin N."/>
            <person name="Holroyd S."/>
            <person name="Jagels K."/>
            <person name="Moule S."/>
            <person name="Quail M.A."/>
            <person name="Rabbinowitsch E."/>
            <person name="Rutherford K.M."/>
            <person name="Thomson N.R."/>
            <person name="Unwin L."/>
            <person name="Whitehead S."/>
            <person name="Barrell B.G."/>
            <person name="Parkhill J."/>
        </authorList>
    </citation>
    <scope>NUCLEOTIDE SEQUENCE [LARGE SCALE GENOMIC DNA]</scope>
    <source>
        <strain>ATCC 700971 / NCTC 13129 / Biotype gravis</strain>
    </source>
</reference>
<dbReference type="EMBL" id="BX248355">
    <property type="protein sequence ID" value="CAE49088.1"/>
    <property type="molecule type" value="Genomic_DNA"/>
</dbReference>
<dbReference type="RefSeq" id="WP_004566891.1">
    <property type="nucleotide sequence ID" value="NC_002935.2"/>
</dbReference>
<dbReference type="SMR" id="Q6NJ38"/>
<dbReference type="STRING" id="257309.DIP0575"/>
<dbReference type="GeneID" id="97331183"/>
<dbReference type="KEGG" id="cdi:DIP0575"/>
<dbReference type="HOGENOM" id="CLU_132825_2_0_11"/>
<dbReference type="Proteomes" id="UP000002198">
    <property type="component" value="Chromosome"/>
</dbReference>
<dbReference type="GO" id="GO:0005737">
    <property type="term" value="C:cytoplasm"/>
    <property type="evidence" value="ECO:0007669"/>
    <property type="project" value="UniProtKB-SubCell"/>
</dbReference>
<dbReference type="GO" id="GO:0005524">
    <property type="term" value="F:ATP binding"/>
    <property type="evidence" value="ECO:0007669"/>
    <property type="project" value="InterPro"/>
</dbReference>
<dbReference type="GO" id="GO:0046872">
    <property type="term" value="F:metal ion binding"/>
    <property type="evidence" value="ECO:0007669"/>
    <property type="project" value="TreeGrafter"/>
</dbReference>
<dbReference type="GO" id="GO:0044183">
    <property type="term" value="F:protein folding chaperone"/>
    <property type="evidence" value="ECO:0007669"/>
    <property type="project" value="InterPro"/>
</dbReference>
<dbReference type="GO" id="GO:0051087">
    <property type="term" value="F:protein-folding chaperone binding"/>
    <property type="evidence" value="ECO:0007669"/>
    <property type="project" value="TreeGrafter"/>
</dbReference>
<dbReference type="GO" id="GO:0051082">
    <property type="term" value="F:unfolded protein binding"/>
    <property type="evidence" value="ECO:0007669"/>
    <property type="project" value="TreeGrafter"/>
</dbReference>
<dbReference type="GO" id="GO:0051085">
    <property type="term" value="P:chaperone cofactor-dependent protein refolding"/>
    <property type="evidence" value="ECO:0007669"/>
    <property type="project" value="TreeGrafter"/>
</dbReference>
<dbReference type="CDD" id="cd00320">
    <property type="entry name" value="cpn10"/>
    <property type="match status" value="1"/>
</dbReference>
<dbReference type="FunFam" id="2.30.33.40:FF:000001">
    <property type="entry name" value="10 kDa chaperonin"/>
    <property type="match status" value="1"/>
</dbReference>
<dbReference type="Gene3D" id="2.30.33.40">
    <property type="entry name" value="GroES chaperonin"/>
    <property type="match status" value="1"/>
</dbReference>
<dbReference type="HAMAP" id="MF_00580">
    <property type="entry name" value="CH10"/>
    <property type="match status" value="1"/>
</dbReference>
<dbReference type="InterPro" id="IPR020818">
    <property type="entry name" value="Chaperonin_GroES"/>
</dbReference>
<dbReference type="InterPro" id="IPR037124">
    <property type="entry name" value="Chaperonin_GroES_sf"/>
</dbReference>
<dbReference type="InterPro" id="IPR018369">
    <property type="entry name" value="Chaprnonin_Cpn10_CS"/>
</dbReference>
<dbReference type="InterPro" id="IPR011032">
    <property type="entry name" value="GroES-like_sf"/>
</dbReference>
<dbReference type="NCBIfam" id="NF001530">
    <property type="entry name" value="PRK00364.1-6"/>
    <property type="match status" value="1"/>
</dbReference>
<dbReference type="NCBIfam" id="NF001531">
    <property type="entry name" value="PRK00364.2-2"/>
    <property type="match status" value="1"/>
</dbReference>
<dbReference type="NCBIfam" id="NF001534">
    <property type="entry name" value="PRK00364.2-5"/>
    <property type="match status" value="1"/>
</dbReference>
<dbReference type="PANTHER" id="PTHR10772">
    <property type="entry name" value="10 KDA HEAT SHOCK PROTEIN"/>
    <property type="match status" value="1"/>
</dbReference>
<dbReference type="PANTHER" id="PTHR10772:SF58">
    <property type="entry name" value="CO-CHAPERONIN GROES"/>
    <property type="match status" value="1"/>
</dbReference>
<dbReference type="Pfam" id="PF00166">
    <property type="entry name" value="Cpn10"/>
    <property type="match status" value="1"/>
</dbReference>
<dbReference type="PRINTS" id="PR00297">
    <property type="entry name" value="CHAPERONIN10"/>
</dbReference>
<dbReference type="SMART" id="SM00883">
    <property type="entry name" value="Cpn10"/>
    <property type="match status" value="1"/>
</dbReference>
<dbReference type="SUPFAM" id="SSF50129">
    <property type="entry name" value="GroES-like"/>
    <property type="match status" value="1"/>
</dbReference>
<dbReference type="PROSITE" id="PS00681">
    <property type="entry name" value="CHAPERONINS_CPN10"/>
    <property type="match status" value="1"/>
</dbReference>
<accession>Q6NJ38</accession>
<protein>
    <recommendedName>
        <fullName evidence="1">Co-chaperonin GroES</fullName>
    </recommendedName>
    <alternativeName>
        <fullName evidence="1">10 kDa chaperonin</fullName>
    </alternativeName>
    <alternativeName>
        <fullName evidence="1">Chaperonin-10</fullName>
        <shortName evidence="1">Cpn10</shortName>
    </alternativeName>
</protein>
<gene>
    <name evidence="1" type="primary">groES</name>
    <name evidence="1" type="synonym">groS</name>
    <name type="ordered locus">DIP0575</name>
</gene>
<sequence>MANVNIKPLEDRVLVQISEAETTTASGLVIPDSAKEKPQEGVVVAAGPGRFDGDDRVPMDIKEGDTVVFSKYGGTELKYNGEEYLLLNARDVLAIIEK</sequence>